<reference key="1">
    <citation type="journal article" date="2001" name="Mech. Dev.">
        <title>Secreted Frizzled-related proteins can regulate metanephric development.</title>
        <authorList>
            <person name="Yoshino K."/>
            <person name="Rubin J.S."/>
            <person name="Higinbotham K.G."/>
            <person name="Uren A."/>
            <person name="Anest V."/>
            <person name="Plisov S.Y."/>
            <person name="Perantoni A.O."/>
        </authorList>
    </citation>
    <scope>NUCLEOTIDE SEQUENCE [MRNA]</scope>
    <scope>DEVELOPMENTAL STAGE</scope>
    <source>
        <strain>Fischer</strain>
    </source>
</reference>
<evidence type="ECO:0000250" key="1"/>
<evidence type="ECO:0000255" key="2">
    <source>
        <dbReference type="PROSITE-ProRule" id="PRU00090"/>
    </source>
</evidence>
<evidence type="ECO:0000255" key="3">
    <source>
        <dbReference type="PROSITE-ProRule" id="PRU00295"/>
    </source>
</evidence>
<evidence type="ECO:0000269" key="4">
    <source>
    </source>
</evidence>
<evidence type="ECO:0000305" key="5"/>
<keyword id="KW-0217">Developmental protein</keyword>
<keyword id="KW-0221">Differentiation</keyword>
<keyword id="KW-1015">Disulfide bond</keyword>
<keyword id="KW-0325">Glycoprotein</keyword>
<keyword id="KW-1185">Reference proteome</keyword>
<keyword id="KW-0964">Secreted</keyword>
<keyword id="KW-0879">Wnt signaling pathway</keyword>
<sequence>VRDSCEPVMQFFGFYWPEMLKCDKFPEGDVCIAMTPPNATEASKPQGTTVCPPCDNELKSEAIIEHLCASEFALRMKIKEVKKENGDKKIVPKKKKPLKLGPIKKKELKRLVLFLKNGADCPCHQLDNLSHNFLIMGRKVKSQYLLTAIHKWDKKNKE</sequence>
<protein>
    <recommendedName>
        <fullName>Secreted frizzled-related protein 1</fullName>
        <shortName>sFRP-1</shortName>
    </recommendedName>
</protein>
<organism>
    <name type="scientific">Rattus norvegicus</name>
    <name type="common">Rat</name>
    <dbReference type="NCBI Taxonomy" id="10116"/>
    <lineage>
        <taxon>Eukaryota</taxon>
        <taxon>Metazoa</taxon>
        <taxon>Chordata</taxon>
        <taxon>Craniata</taxon>
        <taxon>Vertebrata</taxon>
        <taxon>Euteleostomi</taxon>
        <taxon>Mammalia</taxon>
        <taxon>Eutheria</taxon>
        <taxon>Euarchontoglires</taxon>
        <taxon>Glires</taxon>
        <taxon>Rodentia</taxon>
        <taxon>Myomorpha</taxon>
        <taxon>Muroidea</taxon>
        <taxon>Muridae</taxon>
        <taxon>Murinae</taxon>
        <taxon>Rattus</taxon>
    </lineage>
</organism>
<gene>
    <name type="primary">Sfrp1</name>
</gene>
<dbReference type="EMBL" id="AF167308">
    <property type="protein sequence ID" value="AAD49337.1"/>
    <property type="molecule type" value="mRNA"/>
</dbReference>
<dbReference type="SMR" id="Q9R168"/>
<dbReference type="FunCoup" id="Q9R168">
    <property type="interactions" value="88"/>
</dbReference>
<dbReference type="IntAct" id="Q9R168">
    <property type="interactions" value="1"/>
</dbReference>
<dbReference type="STRING" id="10116.ENSRNOP00000024128"/>
<dbReference type="ChEMBL" id="CHEMBL1075241"/>
<dbReference type="GlyCosmos" id="Q9R168">
    <property type="glycosylation" value="1 site, No reported glycans"/>
</dbReference>
<dbReference type="GlyGen" id="Q9R168">
    <property type="glycosylation" value="1 site"/>
</dbReference>
<dbReference type="PhosphoSitePlus" id="Q9R168"/>
<dbReference type="PaxDb" id="10116-ENSRNOP00000024128"/>
<dbReference type="UCSC" id="RGD:621074">
    <property type="organism name" value="rat"/>
</dbReference>
<dbReference type="AGR" id="RGD:621074"/>
<dbReference type="RGD" id="621074">
    <property type="gene designation" value="Sfrp1"/>
</dbReference>
<dbReference type="eggNOG" id="KOG3577">
    <property type="taxonomic scope" value="Eukaryota"/>
</dbReference>
<dbReference type="InParanoid" id="Q9R168"/>
<dbReference type="PhylomeDB" id="Q9R168"/>
<dbReference type="Proteomes" id="UP000002494">
    <property type="component" value="Unplaced"/>
</dbReference>
<dbReference type="GO" id="GO:0009986">
    <property type="term" value="C:cell surface"/>
    <property type="evidence" value="ECO:0000266"/>
    <property type="project" value="RGD"/>
</dbReference>
<dbReference type="GO" id="GO:0005829">
    <property type="term" value="C:cytosol"/>
    <property type="evidence" value="ECO:0000266"/>
    <property type="project" value="RGD"/>
</dbReference>
<dbReference type="GO" id="GO:0005615">
    <property type="term" value="C:extracellular space"/>
    <property type="evidence" value="ECO:0000266"/>
    <property type="project" value="RGD"/>
</dbReference>
<dbReference type="GO" id="GO:0004197">
    <property type="term" value="F:cysteine-type endopeptidase activity"/>
    <property type="evidence" value="ECO:0000266"/>
    <property type="project" value="RGD"/>
</dbReference>
<dbReference type="GO" id="GO:0005109">
    <property type="term" value="F:frizzled binding"/>
    <property type="evidence" value="ECO:0000266"/>
    <property type="project" value="RGD"/>
</dbReference>
<dbReference type="GO" id="GO:0008201">
    <property type="term" value="F:heparin binding"/>
    <property type="evidence" value="ECO:0000266"/>
    <property type="project" value="RGD"/>
</dbReference>
<dbReference type="GO" id="GO:0042802">
    <property type="term" value="F:identical protein binding"/>
    <property type="evidence" value="ECO:0000266"/>
    <property type="project" value="RGD"/>
</dbReference>
<dbReference type="GO" id="GO:0017147">
    <property type="term" value="F:Wnt-protein binding"/>
    <property type="evidence" value="ECO:0000266"/>
    <property type="project" value="RGD"/>
</dbReference>
<dbReference type="GO" id="GO:0009952">
    <property type="term" value="P:anterior/posterior pattern specification"/>
    <property type="evidence" value="ECO:0000266"/>
    <property type="project" value="RGD"/>
</dbReference>
<dbReference type="GO" id="GO:0030509">
    <property type="term" value="P:BMP signaling pathway"/>
    <property type="evidence" value="ECO:0000266"/>
    <property type="project" value="RGD"/>
</dbReference>
<dbReference type="GO" id="GO:0060346">
    <property type="term" value="P:bone trabecula formation"/>
    <property type="evidence" value="ECO:0000266"/>
    <property type="project" value="RGD"/>
</dbReference>
<dbReference type="GO" id="GO:0060070">
    <property type="term" value="P:canonical Wnt signaling pathway"/>
    <property type="evidence" value="ECO:0000266"/>
    <property type="project" value="RGD"/>
</dbReference>
<dbReference type="GO" id="GO:0071773">
    <property type="term" value="P:cellular response to BMP stimulus"/>
    <property type="evidence" value="ECO:0000266"/>
    <property type="project" value="RGD"/>
</dbReference>
<dbReference type="GO" id="GO:0071392">
    <property type="term" value="P:cellular response to estradiol stimulus"/>
    <property type="evidence" value="ECO:0000266"/>
    <property type="project" value="RGD"/>
</dbReference>
<dbReference type="GO" id="GO:0071391">
    <property type="term" value="P:cellular response to estrogen stimulus"/>
    <property type="evidence" value="ECO:0000266"/>
    <property type="project" value="RGD"/>
</dbReference>
<dbReference type="GO" id="GO:0071456">
    <property type="term" value="P:cellular response to hypoxia"/>
    <property type="evidence" value="ECO:0000266"/>
    <property type="project" value="RGD"/>
</dbReference>
<dbReference type="GO" id="GO:0071347">
    <property type="term" value="P:cellular response to interleukin-1"/>
    <property type="evidence" value="ECO:0000266"/>
    <property type="project" value="RGD"/>
</dbReference>
<dbReference type="GO" id="GO:0071380">
    <property type="term" value="P:cellular response to prostaglandin E stimulus"/>
    <property type="evidence" value="ECO:0000270"/>
    <property type="project" value="RGD"/>
</dbReference>
<dbReference type="GO" id="GO:0009267">
    <property type="term" value="P:cellular response to starvation"/>
    <property type="evidence" value="ECO:0000266"/>
    <property type="project" value="RGD"/>
</dbReference>
<dbReference type="GO" id="GO:0071560">
    <property type="term" value="P:cellular response to transforming growth factor beta stimulus"/>
    <property type="evidence" value="ECO:0000266"/>
    <property type="project" value="RGD"/>
</dbReference>
<dbReference type="GO" id="GO:0071356">
    <property type="term" value="P:cellular response to tumor necrosis factor"/>
    <property type="evidence" value="ECO:0000266"/>
    <property type="project" value="RGD"/>
</dbReference>
<dbReference type="GO" id="GO:0071305">
    <property type="term" value="P:cellular response to vitamin D"/>
    <property type="evidence" value="ECO:0000266"/>
    <property type="project" value="RGD"/>
</dbReference>
<dbReference type="GO" id="GO:0071481">
    <property type="term" value="P:cellular response to X-ray"/>
    <property type="evidence" value="ECO:0000266"/>
    <property type="project" value="RGD"/>
</dbReference>
<dbReference type="GO" id="GO:0090246">
    <property type="term" value="P:convergent extension involved in somitogenesis"/>
    <property type="evidence" value="ECO:0000266"/>
    <property type="project" value="RGD"/>
</dbReference>
<dbReference type="GO" id="GO:0046546">
    <property type="term" value="P:development of primary male sexual characteristics"/>
    <property type="evidence" value="ECO:0000266"/>
    <property type="project" value="RGD"/>
</dbReference>
<dbReference type="GO" id="GO:0048546">
    <property type="term" value="P:digestive tract morphogenesis"/>
    <property type="evidence" value="ECO:0000266"/>
    <property type="project" value="RGD"/>
</dbReference>
<dbReference type="GO" id="GO:0071542">
    <property type="term" value="P:dopaminergic neuron differentiation"/>
    <property type="evidence" value="ECO:0000266"/>
    <property type="project" value="RGD"/>
</dbReference>
<dbReference type="GO" id="GO:0009950">
    <property type="term" value="P:dorsal/ventral axis specification"/>
    <property type="evidence" value="ECO:0000266"/>
    <property type="project" value="RGD"/>
</dbReference>
<dbReference type="GO" id="GO:0097191">
    <property type="term" value="P:extrinsic apoptotic signaling pathway"/>
    <property type="evidence" value="ECO:0000266"/>
    <property type="project" value="RGD"/>
</dbReference>
<dbReference type="GO" id="GO:0008585">
    <property type="term" value="P:female gonad development"/>
    <property type="evidence" value="ECO:0000266"/>
    <property type="project" value="RGD"/>
</dbReference>
<dbReference type="GO" id="GO:0002244">
    <property type="term" value="P:hematopoietic progenitor cell differentiation"/>
    <property type="evidence" value="ECO:0000266"/>
    <property type="project" value="RGD"/>
</dbReference>
<dbReference type="GO" id="GO:0060218">
    <property type="term" value="P:hematopoietic stem cell differentiation"/>
    <property type="evidence" value="ECO:0000266"/>
    <property type="project" value="RGD"/>
</dbReference>
<dbReference type="GO" id="GO:0030097">
    <property type="term" value="P:hemopoiesis"/>
    <property type="evidence" value="ECO:0000266"/>
    <property type="project" value="RGD"/>
</dbReference>
<dbReference type="GO" id="GO:0008584">
    <property type="term" value="P:male gonad development"/>
    <property type="evidence" value="ECO:0000266"/>
    <property type="project" value="RGD"/>
</dbReference>
<dbReference type="GO" id="GO:0060766">
    <property type="term" value="P:negative regulation of androgen receptor signaling pathway"/>
    <property type="evidence" value="ECO:0000266"/>
    <property type="project" value="RGD"/>
</dbReference>
<dbReference type="GO" id="GO:0043066">
    <property type="term" value="P:negative regulation of apoptotic process"/>
    <property type="evidence" value="ECO:0000266"/>
    <property type="project" value="RGD"/>
</dbReference>
<dbReference type="GO" id="GO:0045578">
    <property type="term" value="P:negative regulation of B cell differentiation"/>
    <property type="evidence" value="ECO:0000266"/>
    <property type="project" value="RGD"/>
</dbReference>
<dbReference type="GO" id="GO:0030514">
    <property type="term" value="P:negative regulation of BMP signaling pathway"/>
    <property type="evidence" value="ECO:0000266"/>
    <property type="project" value="RGD"/>
</dbReference>
<dbReference type="GO" id="GO:0046851">
    <property type="term" value="P:negative regulation of bone remodeling"/>
    <property type="evidence" value="ECO:0000266"/>
    <property type="project" value="RGD"/>
</dbReference>
<dbReference type="GO" id="GO:0090090">
    <property type="term" value="P:negative regulation of canonical Wnt signaling pathway"/>
    <property type="evidence" value="ECO:0000314"/>
    <property type="project" value="UniProtKB"/>
</dbReference>
<dbReference type="GO" id="GO:0030308">
    <property type="term" value="P:negative regulation of cell growth"/>
    <property type="evidence" value="ECO:0000266"/>
    <property type="project" value="RGD"/>
</dbReference>
<dbReference type="GO" id="GO:0030336">
    <property type="term" value="P:negative regulation of cell migration"/>
    <property type="evidence" value="ECO:0000266"/>
    <property type="project" value="RGD"/>
</dbReference>
<dbReference type="GO" id="GO:0008285">
    <property type="term" value="P:negative regulation of cell population proliferation"/>
    <property type="evidence" value="ECO:0000266"/>
    <property type="project" value="RGD"/>
</dbReference>
<dbReference type="GO" id="GO:0045892">
    <property type="term" value="P:negative regulation of DNA-templated transcription"/>
    <property type="evidence" value="ECO:0000266"/>
    <property type="project" value="RGD"/>
</dbReference>
<dbReference type="GO" id="GO:0050680">
    <property type="term" value="P:negative regulation of epithelial cell proliferation"/>
    <property type="evidence" value="ECO:0000266"/>
    <property type="project" value="RGD"/>
</dbReference>
<dbReference type="GO" id="GO:0010719">
    <property type="term" value="P:negative regulation of epithelial to mesenchymal transition"/>
    <property type="evidence" value="ECO:0000266"/>
    <property type="project" value="RGD"/>
</dbReference>
<dbReference type="GO" id="GO:2000270">
    <property type="term" value="P:negative regulation of fibroblast apoptotic process"/>
    <property type="evidence" value="ECO:0000266"/>
    <property type="project" value="RGD"/>
</dbReference>
<dbReference type="GO" id="GO:0048147">
    <property type="term" value="P:negative regulation of fibroblast proliferation"/>
    <property type="evidence" value="ECO:0000266"/>
    <property type="project" value="RGD"/>
</dbReference>
<dbReference type="GO" id="GO:0010629">
    <property type="term" value="P:negative regulation of gene expression"/>
    <property type="evidence" value="ECO:0000266"/>
    <property type="project" value="RGD"/>
</dbReference>
<dbReference type="GO" id="GO:0046676">
    <property type="term" value="P:negative regulation of insulin secretion"/>
    <property type="evidence" value="ECO:0000266"/>
    <property type="project" value="RGD"/>
</dbReference>
<dbReference type="GO" id="GO:0030279">
    <property type="term" value="P:negative regulation of ossification"/>
    <property type="evidence" value="ECO:0000266"/>
    <property type="project" value="RGD"/>
</dbReference>
<dbReference type="GO" id="GO:0045668">
    <property type="term" value="P:negative regulation of osteoblast differentiation"/>
    <property type="evidence" value="ECO:0000266"/>
    <property type="project" value="RGD"/>
</dbReference>
<dbReference type="GO" id="GO:0033689">
    <property type="term" value="P:negative regulation of osteoblast proliferation"/>
    <property type="evidence" value="ECO:0000266"/>
    <property type="project" value="RGD"/>
</dbReference>
<dbReference type="GO" id="GO:0045671">
    <property type="term" value="P:negative regulation of osteoclast differentiation"/>
    <property type="evidence" value="ECO:0000315"/>
    <property type="project" value="RGD"/>
</dbReference>
<dbReference type="GO" id="GO:0030178">
    <property type="term" value="P:negative regulation of Wnt signaling pathway"/>
    <property type="evidence" value="ECO:0000314"/>
    <property type="project" value="RGD"/>
</dbReference>
<dbReference type="GO" id="GO:0014034">
    <property type="term" value="P:neural crest cell fate commitment"/>
    <property type="evidence" value="ECO:0000266"/>
    <property type="project" value="RGD"/>
</dbReference>
<dbReference type="GO" id="GO:0001843">
    <property type="term" value="P:neural tube closure"/>
    <property type="evidence" value="ECO:0000266"/>
    <property type="project" value="RGD"/>
</dbReference>
<dbReference type="GO" id="GO:0021915">
    <property type="term" value="P:neural tube development"/>
    <property type="evidence" value="ECO:0000266"/>
    <property type="project" value="RGD"/>
</dbReference>
<dbReference type="GO" id="GO:0001649">
    <property type="term" value="P:osteoblast differentiation"/>
    <property type="evidence" value="ECO:0000270"/>
    <property type="project" value="UniProtKB"/>
</dbReference>
<dbReference type="GO" id="GO:0030316">
    <property type="term" value="P:osteoclast differentiation"/>
    <property type="evidence" value="ECO:0000266"/>
    <property type="project" value="RGD"/>
</dbReference>
<dbReference type="GO" id="GO:0043065">
    <property type="term" value="P:positive regulation of apoptotic process"/>
    <property type="evidence" value="ECO:0000266"/>
    <property type="project" value="RGD"/>
</dbReference>
<dbReference type="GO" id="GO:0090263">
    <property type="term" value="P:positive regulation of canonical Wnt signaling pathway"/>
    <property type="evidence" value="ECO:0000266"/>
    <property type="project" value="RGD"/>
</dbReference>
<dbReference type="GO" id="GO:0030307">
    <property type="term" value="P:positive regulation of cell growth"/>
    <property type="evidence" value="ECO:0000266"/>
    <property type="project" value="RGD"/>
</dbReference>
<dbReference type="GO" id="GO:0008284">
    <property type="term" value="P:positive regulation of cell population proliferation"/>
    <property type="evidence" value="ECO:0000266"/>
    <property type="project" value="RGD"/>
</dbReference>
<dbReference type="GO" id="GO:0045893">
    <property type="term" value="P:positive regulation of DNA-templated transcription"/>
    <property type="evidence" value="ECO:0000266"/>
    <property type="project" value="RGD"/>
</dbReference>
<dbReference type="GO" id="GO:0050679">
    <property type="term" value="P:positive regulation of epithelial cell proliferation"/>
    <property type="evidence" value="ECO:0000266"/>
    <property type="project" value="RGD"/>
</dbReference>
<dbReference type="GO" id="GO:2001238">
    <property type="term" value="P:positive regulation of extrinsic apoptotic signaling pathway"/>
    <property type="evidence" value="ECO:0000266"/>
    <property type="project" value="RGD"/>
</dbReference>
<dbReference type="GO" id="GO:1902043">
    <property type="term" value="P:positive regulation of extrinsic apoptotic signaling pathway via death domain receptors"/>
    <property type="evidence" value="ECO:0000266"/>
    <property type="project" value="RGD"/>
</dbReference>
<dbReference type="GO" id="GO:0045600">
    <property type="term" value="P:positive regulation of fat cell differentiation"/>
    <property type="evidence" value="ECO:0000266"/>
    <property type="project" value="RGD"/>
</dbReference>
<dbReference type="GO" id="GO:2000271">
    <property type="term" value="P:positive regulation of fibroblast apoptotic process"/>
    <property type="evidence" value="ECO:0000266"/>
    <property type="project" value="RGD"/>
</dbReference>
<dbReference type="GO" id="GO:2000052">
    <property type="term" value="P:positive regulation of non-canonical Wnt signaling pathway"/>
    <property type="evidence" value="ECO:0000266"/>
    <property type="project" value="RGD"/>
</dbReference>
<dbReference type="GO" id="GO:0045880">
    <property type="term" value="P:positive regulation of smoothened signaling pathway"/>
    <property type="evidence" value="ECO:0000266"/>
    <property type="project" value="RGD"/>
</dbReference>
<dbReference type="GO" id="GO:1904692">
    <property type="term" value="P:positive regulation of type B pancreatic cell proliferation"/>
    <property type="evidence" value="ECO:0000266"/>
    <property type="project" value="RGD"/>
</dbReference>
<dbReference type="GO" id="GO:0030177">
    <property type="term" value="P:positive regulation of Wnt signaling pathway"/>
    <property type="evidence" value="ECO:0000266"/>
    <property type="project" value="RGD"/>
</dbReference>
<dbReference type="GO" id="GO:0060527">
    <property type="term" value="P:prostate epithelial cord arborization involved in prostate glandular acinus morphogenesis"/>
    <property type="evidence" value="ECO:0000266"/>
    <property type="project" value="RGD"/>
</dbReference>
<dbReference type="GO" id="GO:0060687">
    <property type="term" value="P:regulation of branching involved in prostate gland morphogenesis"/>
    <property type="evidence" value="ECO:0000266"/>
    <property type="project" value="RGD"/>
</dbReference>
<dbReference type="GO" id="GO:0010564">
    <property type="term" value="P:regulation of cell cycle process"/>
    <property type="evidence" value="ECO:0000266"/>
    <property type="project" value="RGD"/>
</dbReference>
<dbReference type="GO" id="GO:0090175">
    <property type="term" value="P:regulation of establishment of planar polarity"/>
    <property type="evidence" value="ECO:0000266"/>
    <property type="project" value="RGD"/>
</dbReference>
<dbReference type="GO" id="GO:1904956">
    <property type="term" value="P:regulation of midbrain dopaminergic neuron differentiation"/>
    <property type="evidence" value="ECO:0000266"/>
    <property type="project" value="RGD"/>
</dbReference>
<dbReference type="GO" id="GO:0010975">
    <property type="term" value="P:regulation of neuron projection development"/>
    <property type="evidence" value="ECO:0000266"/>
    <property type="project" value="RGD"/>
</dbReference>
<dbReference type="GO" id="GO:0030278">
    <property type="term" value="P:regulation of ossification"/>
    <property type="evidence" value="ECO:0000315"/>
    <property type="project" value="RGD"/>
</dbReference>
<dbReference type="GO" id="GO:0009410">
    <property type="term" value="P:response to xenobiotic stimulus"/>
    <property type="evidence" value="ECO:0000266"/>
    <property type="project" value="RGD"/>
</dbReference>
<dbReference type="GO" id="GO:0035019">
    <property type="term" value="P:somatic stem cell population maintenance"/>
    <property type="evidence" value="ECO:0000266"/>
    <property type="project" value="RGD"/>
</dbReference>
<dbReference type="GO" id="GO:0001756">
    <property type="term" value="P:somitogenesis"/>
    <property type="evidence" value="ECO:0000266"/>
    <property type="project" value="RGD"/>
</dbReference>
<dbReference type="GO" id="GO:0044345">
    <property type="term" value="P:stromal-epithelial cell signaling involved in prostate gland development"/>
    <property type="evidence" value="ECO:0000266"/>
    <property type="project" value="RGD"/>
</dbReference>
<dbReference type="GO" id="GO:0001657">
    <property type="term" value="P:ureteric bud development"/>
    <property type="evidence" value="ECO:0000266"/>
    <property type="project" value="RGD"/>
</dbReference>
<dbReference type="GO" id="GO:0090244">
    <property type="term" value="P:Wnt signaling pathway involved in somitogenesis"/>
    <property type="evidence" value="ECO:0000266"/>
    <property type="project" value="RGD"/>
</dbReference>
<dbReference type="GO" id="GO:0060071">
    <property type="term" value="P:Wnt signaling pathway, planar cell polarity pathway"/>
    <property type="evidence" value="ECO:0000266"/>
    <property type="project" value="RGD"/>
</dbReference>
<dbReference type="CDD" id="cd03580">
    <property type="entry name" value="NTR_Sfrp1_like"/>
    <property type="match status" value="1"/>
</dbReference>
<dbReference type="FunFam" id="2.40.50.120:FF:000003">
    <property type="entry name" value="Secreted frizzled-related protein 1"/>
    <property type="match status" value="1"/>
</dbReference>
<dbReference type="Gene3D" id="2.40.50.120">
    <property type="match status" value="1"/>
</dbReference>
<dbReference type="Gene3D" id="1.10.2000.10">
    <property type="entry name" value="Frizzled cysteine-rich domain"/>
    <property type="match status" value="1"/>
</dbReference>
<dbReference type="InterPro" id="IPR015526">
    <property type="entry name" value="Frizzled/SFRP"/>
</dbReference>
<dbReference type="InterPro" id="IPR020067">
    <property type="entry name" value="Frizzled_dom"/>
</dbReference>
<dbReference type="InterPro" id="IPR036790">
    <property type="entry name" value="Frizzled_dom_sf"/>
</dbReference>
<dbReference type="InterPro" id="IPR001134">
    <property type="entry name" value="Netrin_domain"/>
</dbReference>
<dbReference type="InterPro" id="IPR018933">
    <property type="entry name" value="Netrin_module_non-TIMP"/>
</dbReference>
<dbReference type="InterPro" id="IPR008993">
    <property type="entry name" value="TIMP-like_OB-fold"/>
</dbReference>
<dbReference type="PANTHER" id="PTHR11309">
    <property type="entry name" value="FRIZZLED"/>
    <property type="match status" value="1"/>
</dbReference>
<dbReference type="PANTHER" id="PTHR11309:SF87">
    <property type="entry name" value="SECRETED FRIZZLED-RELATED PROTEIN 1"/>
    <property type="match status" value="1"/>
</dbReference>
<dbReference type="Pfam" id="PF01759">
    <property type="entry name" value="NTR"/>
    <property type="match status" value="1"/>
</dbReference>
<dbReference type="SMART" id="SM00643">
    <property type="entry name" value="C345C"/>
    <property type="match status" value="1"/>
</dbReference>
<dbReference type="SUPFAM" id="SSF63501">
    <property type="entry name" value="Frizzled cysteine-rich domain"/>
    <property type="match status" value="1"/>
</dbReference>
<dbReference type="SUPFAM" id="SSF50242">
    <property type="entry name" value="TIMP-like"/>
    <property type="match status" value="1"/>
</dbReference>
<dbReference type="PROSITE" id="PS50038">
    <property type="entry name" value="FZ"/>
    <property type="match status" value="1"/>
</dbReference>
<dbReference type="PROSITE" id="PS50189">
    <property type="entry name" value="NTR"/>
    <property type="match status" value="1"/>
</dbReference>
<feature type="chain" id="PRO_0000191647" description="Secreted frizzled-related protein 1">
    <location>
        <begin position="1" status="less than"/>
        <end position="158" status="greater than"/>
    </location>
</feature>
<feature type="domain" description="FZ" evidence="2">
    <location>
        <begin position="1" status="less than"/>
        <end position="34"/>
    </location>
</feature>
<feature type="domain" description="NTR" evidence="3">
    <location>
        <begin position="51"/>
        <end position="158" status="greater than"/>
    </location>
</feature>
<feature type="glycosylation site" description="N-linked (GlcNAc...) asparagine" evidence="1">
    <location>
        <position position="38"/>
    </location>
</feature>
<feature type="disulfide bond" evidence="1">
    <location>
        <begin position="51"/>
        <end position="121"/>
    </location>
</feature>
<feature type="disulfide bond" evidence="1">
    <location>
        <begin position="68"/>
        <end position="123"/>
    </location>
</feature>
<feature type="non-terminal residue">
    <location>
        <position position="1"/>
    </location>
</feature>
<feature type="non-terminal residue">
    <location>
        <position position="158"/>
    </location>
</feature>
<accession>Q9R168</accession>
<proteinExistence type="evidence at transcript level"/>
<comment type="function">
    <text evidence="1">Soluble frizzled-related proteins (sFRPS) function as modulators of Wnt signaling through direct interaction with Wnts. They have a role in regulating cell growth and differentiation in specific cell types. SFRP1 decreases intracellular beta-catenin levels (By similarity). Has antiproliferative effects on vascular cells, in vitro and in vivo, and can induce, in vivo, an angiogenic response. In vascular cell cycle, delays the G1 phase and entry into the S phase. In kidney development, inhibits tubule formation and bud growth in metanephroi. Inhibits WNT1/WNT4-mediated TCF-dependent transcription.</text>
</comment>
<comment type="subunit">
    <text evidence="1">Interacts with WNT4, WNT1, WNT2, WNT8, MYOC and FRZD6.</text>
</comment>
<comment type="subcellular location">
    <subcellularLocation>
        <location evidence="1">Secreted</location>
    </subcellularLocation>
    <text evidence="1">Cell membrane or extracellular matrix-associated. Released by heparin-binding (By similarity).</text>
</comment>
<comment type="developmental stage">
    <text evidence="4">Differentially expressed in developing kidney. In 16 dpc embryos, highly expressed around the ureter and, also in all stromal elements, including the interstitial populations of the medulla and the outer layer of the cortex. In 19 dpc embryos, expression in the medulla is increased and is also found in the mesenchymal tissue surrounding the developing ureter.</text>
</comment>
<comment type="domain">
    <text evidence="1">The FZ domain is involved in binding with Wnt ligands.</text>
</comment>
<comment type="similarity">
    <text evidence="5">Belongs to the secreted frizzled-related protein (sFRP) family.</text>
</comment>
<name>SFRP1_RAT</name>